<gene>
    <name evidence="1" type="primary">ais</name>
    <name type="ordered locus">ECIAI39_2399</name>
</gene>
<keyword id="KW-0378">Hydrolase</keyword>
<keyword id="KW-0574">Periplasm</keyword>
<keyword id="KW-0732">Signal</keyword>
<reference key="1">
    <citation type="journal article" date="2009" name="PLoS Genet.">
        <title>Organised genome dynamics in the Escherichia coli species results in highly diverse adaptive paths.</title>
        <authorList>
            <person name="Touchon M."/>
            <person name="Hoede C."/>
            <person name="Tenaillon O."/>
            <person name="Barbe V."/>
            <person name="Baeriswyl S."/>
            <person name="Bidet P."/>
            <person name="Bingen E."/>
            <person name="Bonacorsi S."/>
            <person name="Bouchier C."/>
            <person name="Bouvet O."/>
            <person name="Calteau A."/>
            <person name="Chiapello H."/>
            <person name="Clermont O."/>
            <person name="Cruveiller S."/>
            <person name="Danchin A."/>
            <person name="Diard M."/>
            <person name="Dossat C."/>
            <person name="Karoui M.E."/>
            <person name="Frapy E."/>
            <person name="Garry L."/>
            <person name="Ghigo J.M."/>
            <person name="Gilles A.M."/>
            <person name="Johnson J."/>
            <person name="Le Bouguenec C."/>
            <person name="Lescat M."/>
            <person name="Mangenot S."/>
            <person name="Martinez-Jehanne V."/>
            <person name="Matic I."/>
            <person name="Nassif X."/>
            <person name="Oztas S."/>
            <person name="Petit M.A."/>
            <person name="Pichon C."/>
            <person name="Rouy Z."/>
            <person name="Ruf C.S."/>
            <person name="Schneider D."/>
            <person name="Tourret J."/>
            <person name="Vacherie B."/>
            <person name="Vallenet D."/>
            <person name="Medigue C."/>
            <person name="Rocha E.P.C."/>
            <person name="Denamur E."/>
        </authorList>
    </citation>
    <scope>NUCLEOTIDE SEQUENCE [LARGE SCALE GENOMIC DNA]</scope>
    <source>
        <strain>IAI39 / ExPEC</strain>
    </source>
</reference>
<proteinExistence type="inferred from homology"/>
<sequence>MLAFCRSSLKSKKYFIILLALAAIAGLGTHAAWSSNGLPRIDNKTLARLAQQHPVVVLFRHAERCDRSTNQCLSDKTGITVKGTQDARELGNAFSADIPDFDLYSSNTVRTIQSATWFSAGKKLTVDKRLLQCGNEIYSAIKNLQSKAPDKNIVIFTHNHCLTYIAKDKRDATFKPDYLDGLVMHVEKGKVYLDGEFVNH</sequence>
<evidence type="ECO:0000255" key="1">
    <source>
        <dbReference type="HAMAP-Rule" id="MF_01868"/>
    </source>
</evidence>
<name>AIS_ECO7I</name>
<protein>
    <recommendedName>
        <fullName evidence="1">Lipopolysaccharide core heptose(II)-phosphate phosphatase</fullName>
        <ecNumber evidence="1">3.1.3.-</ecNumber>
    </recommendedName>
</protein>
<comment type="function">
    <text evidence="1">Catalyzes the dephosphorylation of heptose(II) of the outer membrane lipopolysaccharide core.</text>
</comment>
<comment type="pathway">
    <text evidence="1">Bacterial outer membrane biogenesis; lipopolysaccharide metabolism.</text>
</comment>
<comment type="subcellular location">
    <subcellularLocation>
        <location evidence="1">Periplasm</location>
    </subcellularLocation>
</comment>
<comment type="similarity">
    <text evidence="1">Belongs to the phosphoglycerate mutase family. Ais subfamily.</text>
</comment>
<accession>B7NNT1</accession>
<feature type="signal peptide" evidence="1">
    <location>
        <begin position="1"/>
        <end position="25"/>
    </location>
</feature>
<feature type="chain" id="PRO_0000380569" description="Lipopolysaccharide core heptose(II)-phosphate phosphatase">
    <location>
        <begin position="26"/>
        <end position="200"/>
    </location>
</feature>
<organism>
    <name type="scientific">Escherichia coli O7:K1 (strain IAI39 / ExPEC)</name>
    <dbReference type="NCBI Taxonomy" id="585057"/>
    <lineage>
        <taxon>Bacteria</taxon>
        <taxon>Pseudomonadati</taxon>
        <taxon>Pseudomonadota</taxon>
        <taxon>Gammaproteobacteria</taxon>
        <taxon>Enterobacterales</taxon>
        <taxon>Enterobacteriaceae</taxon>
        <taxon>Escherichia</taxon>
    </lineage>
</organism>
<dbReference type="EC" id="3.1.3.-" evidence="1"/>
<dbReference type="EMBL" id="CU928164">
    <property type="protein sequence ID" value="CAR18525.1"/>
    <property type="molecule type" value="Genomic_DNA"/>
</dbReference>
<dbReference type="RefSeq" id="WP_001571691.1">
    <property type="nucleotide sequence ID" value="NC_011750.1"/>
</dbReference>
<dbReference type="RefSeq" id="YP_002408355.1">
    <property type="nucleotide sequence ID" value="NC_011750.1"/>
</dbReference>
<dbReference type="SMR" id="B7NNT1"/>
<dbReference type="STRING" id="585057.ECIAI39_2399"/>
<dbReference type="KEGG" id="ect:ECIAI39_2399"/>
<dbReference type="PATRIC" id="fig|585057.6.peg.2501"/>
<dbReference type="HOGENOM" id="CLU_106705_1_0_6"/>
<dbReference type="UniPathway" id="UPA00451"/>
<dbReference type="Proteomes" id="UP000000749">
    <property type="component" value="Chromosome"/>
</dbReference>
<dbReference type="GO" id="GO:0042597">
    <property type="term" value="C:periplasmic space"/>
    <property type="evidence" value="ECO:0007669"/>
    <property type="project" value="UniProtKB-SubCell"/>
</dbReference>
<dbReference type="GO" id="GO:0016791">
    <property type="term" value="F:phosphatase activity"/>
    <property type="evidence" value="ECO:0007669"/>
    <property type="project" value="UniProtKB-UniRule"/>
</dbReference>
<dbReference type="GO" id="GO:0008653">
    <property type="term" value="P:lipopolysaccharide metabolic process"/>
    <property type="evidence" value="ECO:0007669"/>
    <property type="project" value="UniProtKB-UniRule"/>
</dbReference>
<dbReference type="CDD" id="cd07040">
    <property type="entry name" value="HP"/>
    <property type="match status" value="1"/>
</dbReference>
<dbReference type="Gene3D" id="3.40.50.1240">
    <property type="entry name" value="Phosphoglycerate mutase-like"/>
    <property type="match status" value="1"/>
</dbReference>
<dbReference type="HAMAP" id="MF_01868">
    <property type="entry name" value="Ais"/>
    <property type="match status" value="1"/>
</dbReference>
<dbReference type="InterPro" id="IPR013078">
    <property type="entry name" value="His_Pase_superF_clade-1"/>
</dbReference>
<dbReference type="InterPro" id="IPR029033">
    <property type="entry name" value="His_PPase_superfam"/>
</dbReference>
<dbReference type="InterPro" id="IPR011310">
    <property type="entry name" value="LipoPS_heptP_Pase"/>
</dbReference>
<dbReference type="NCBIfam" id="NF011945">
    <property type="entry name" value="PRK15416.1"/>
    <property type="match status" value="1"/>
</dbReference>
<dbReference type="Pfam" id="PF00300">
    <property type="entry name" value="His_Phos_1"/>
    <property type="match status" value="1"/>
</dbReference>
<dbReference type="PIRSF" id="PIRSF011416">
    <property type="entry name" value="Ais-TraG-AfrS"/>
    <property type="match status" value="1"/>
</dbReference>
<dbReference type="SUPFAM" id="SSF53254">
    <property type="entry name" value="Phosphoglycerate mutase-like"/>
    <property type="match status" value="1"/>
</dbReference>